<comment type="function">
    <text evidence="3">Interacts with vasopressin V2 receptor (V2R/AVPR2), probably in a selective manner (PubMed:35122240). Inhibits vasopressin binding human V2R in the nanomolar range (Ki=13.3 nM), and also moderately inhibits vasopressin-induced cAMP production (IC(50)=453 nM). In vivo, intraperitoneal injection of this protein into rats increases diuresis by 4.5-fold, without any loss of electrolytes (PubMed:35122240).</text>
</comment>
<comment type="subcellular location">
    <subcellularLocation>
        <location evidence="3">Secreted</location>
    </subcellularLocation>
</comment>
<comment type="tissue specificity">
    <text evidence="6">Expressed by the venom gland.</text>
</comment>
<comment type="domain">
    <text evidence="1">Exploits its two major loops and engages more positions in its interaction with V2R. The pharmacophore defined by numerous amino acids positioned in loop 1 (9 to 18) and loop 2 (34, 39 and 44) may be at the origin of the absolute selectivity of this protein for V2R.</text>
</comment>
<comment type="mass spectrometry" mass="6394.88" method="MALDI" evidence="3">
    <text>Monoisotopic mass.</text>
</comment>
<comment type="similarity">
    <text evidence="5">Belongs to the venom Kunitz-type family.</text>
</comment>
<keyword id="KW-0903">Direct protein sequencing</keyword>
<keyword id="KW-1015">Disulfide bond</keyword>
<keyword id="KW-1213">G-protein coupled receptor impairing toxin</keyword>
<keyword id="KW-0964">Secreted</keyword>
<keyword id="KW-0800">Toxin</keyword>
<sequence length="57" mass="6405">RPSFCNLPVKPGPCNGFFSAFYYSQKKNKCHSFTYGGCKGNANRFSTIEECRRTCVG</sequence>
<dbReference type="SMR" id="C0HLA6"/>
<dbReference type="GO" id="GO:0005615">
    <property type="term" value="C:extracellular space"/>
    <property type="evidence" value="ECO:0007669"/>
    <property type="project" value="TreeGrafter"/>
</dbReference>
<dbReference type="GO" id="GO:0004867">
    <property type="term" value="F:serine-type endopeptidase inhibitor activity"/>
    <property type="evidence" value="ECO:0007669"/>
    <property type="project" value="InterPro"/>
</dbReference>
<dbReference type="GO" id="GO:0090729">
    <property type="term" value="F:toxin activity"/>
    <property type="evidence" value="ECO:0007669"/>
    <property type="project" value="UniProtKB-KW"/>
</dbReference>
<dbReference type="CDD" id="cd22595">
    <property type="entry name" value="Kunitz_dendrotoxin"/>
    <property type="match status" value="1"/>
</dbReference>
<dbReference type="FunFam" id="4.10.410.10:FF:000004">
    <property type="entry name" value="Tissue factor pathway inhibitor"/>
    <property type="match status" value="1"/>
</dbReference>
<dbReference type="Gene3D" id="4.10.410.10">
    <property type="entry name" value="Pancreatic trypsin inhibitor Kunitz domain"/>
    <property type="match status" value="1"/>
</dbReference>
<dbReference type="InterPro" id="IPR002223">
    <property type="entry name" value="Kunitz_BPTI"/>
</dbReference>
<dbReference type="InterPro" id="IPR036880">
    <property type="entry name" value="Kunitz_BPTI_sf"/>
</dbReference>
<dbReference type="InterPro" id="IPR020901">
    <property type="entry name" value="Prtase_inh_Kunz-CS"/>
</dbReference>
<dbReference type="InterPro" id="IPR050098">
    <property type="entry name" value="TFPI/VKTCI-like"/>
</dbReference>
<dbReference type="PANTHER" id="PTHR10083:SF217">
    <property type="entry name" value="BOOPHILIN-H2"/>
    <property type="match status" value="1"/>
</dbReference>
<dbReference type="PANTHER" id="PTHR10083">
    <property type="entry name" value="KUNITZ-TYPE PROTEASE INHIBITOR-RELATED"/>
    <property type="match status" value="1"/>
</dbReference>
<dbReference type="Pfam" id="PF00014">
    <property type="entry name" value="Kunitz_BPTI"/>
    <property type="match status" value="1"/>
</dbReference>
<dbReference type="PRINTS" id="PR00759">
    <property type="entry name" value="BASICPTASE"/>
</dbReference>
<dbReference type="SMART" id="SM00131">
    <property type="entry name" value="KU"/>
    <property type="match status" value="1"/>
</dbReference>
<dbReference type="SUPFAM" id="SSF57362">
    <property type="entry name" value="BPTI-like"/>
    <property type="match status" value="1"/>
</dbReference>
<dbReference type="PROSITE" id="PS00280">
    <property type="entry name" value="BPTI_KUNITZ_1"/>
    <property type="match status" value="1"/>
</dbReference>
<dbReference type="PROSITE" id="PS50279">
    <property type="entry name" value="BPTI_KUNITZ_2"/>
    <property type="match status" value="1"/>
</dbReference>
<feature type="chain" id="PRO_0000457568" description="Mambaquaretin-3" evidence="3">
    <location>
        <begin position="1"/>
        <end position="57"/>
    </location>
</feature>
<feature type="domain" description="BPTI/Kunitz inhibitor" evidence="2">
    <location>
        <begin position="5"/>
        <end position="55"/>
    </location>
</feature>
<feature type="disulfide bond" evidence="1">
    <location>
        <begin position="5"/>
        <end position="55"/>
    </location>
</feature>
<feature type="disulfide bond" evidence="1">
    <location>
        <begin position="14"/>
        <end position="38"/>
    </location>
</feature>
<feature type="disulfide bond" evidence="1">
    <location>
        <begin position="30"/>
        <end position="51"/>
    </location>
</feature>
<reference key="1">
    <citation type="journal article" date="2022" name="Br. J. Pharmacol.">
        <title>A new Kunitz-type snake toxin family associated with an original mode of interaction with the vasopressin 2 receptor.</title>
        <authorList>
            <person name="Droctove L."/>
            <person name="Ciolek J."/>
            <person name="Mendre C."/>
            <person name="Chorfa A."/>
            <person name="Huerta P."/>
            <person name="Carvalho C."/>
            <person name="Gouin C."/>
            <person name="Lancien M."/>
            <person name="Stanajic-Petrovic G."/>
            <person name="Braco L."/>
            <person name="Blanchet G."/>
            <person name="Upert G."/>
            <person name="De Pauw G."/>
            <person name="Barbe P."/>
            <person name="Keck M."/>
            <person name="Mourier G."/>
            <person name="Mouillac B."/>
            <person name="Denis S."/>
            <person name="Rodriguez de la Vega R.C."/>
            <person name="Quinton L."/>
            <person name="Gilles N."/>
        </authorList>
    </citation>
    <scope>PROTEIN SEQUENCE</scope>
    <scope>FUNCTION</scope>
    <scope>BIOASSAY</scope>
    <scope>SUBCELLULAR LOCATION</scope>
    <scope>SYNTHESIS</scope>
    <scope>MASS SPECTROMETRY</scope>
    <source>
        <tissue>Venom</tissue>
    </source>
</reference>
<evidence type="ECO:0000250" key="1">
    <source>
        <dbReference type="UniProtKB" id="A0A1Z0YU59"/>
    </source>
</evidence>
<evidence type="ECO:0000255" key="2">
    <source>
        <dbReference type="PROSITE-ProRule" id="PRU00031"/>
    </source>
</evidence>
<evidence type="ECO:0000269" key="3">
    <source>
    </source>
</evidence>
<evidence type="ECO:0000303" key="4">
    <source>
    </source>
</evidence>
<evidence type="ECO:0000305" key="5"/>
<evidence type="ECO:0000305" key="6">
    <source>
    </source>
</evidence>
<organism>
    <name type="scientific">Dendroaspis polylepis polylepis</name>
    <name type="common">Black mamba</name>
    <dbReference type="NCBI Taxonomy" id="8620"/>
    <lineage>
        <taxon>Eukaryota</taxon>
        <taxon>Metazoa</taxon>
        <taxon>Chordata</taxon>
        <taxon>Craniata</taxon>
        <taxon>Vertebrata</taxon>
        <taxon>Euteleostomi</taxon>
        <taxon>Lepidosauria</taxon>
        <taxon>Squamata</taxon>
        <taxon>Bifurcata</taxon>
        <taxon>Unidentata</taxon>
        <taxon>Episquamata</taxon>
        <taxon>Toxicofera</taxon>
        <taxon>Serpentes</taxon>
        <taxon>Colubroidea</taxon>
        <taxon>Elapidae</taxon>
        <taxon>Elapinae</taxon>
        <taxon>Dendroaspis</taxon>
    </lineage>
</organism>
<accession>C0HLA6</accession>
<proteinExistence type="evidence at protein level"/>
<protein>
    <recommendedName>
        <fullName evidence="4">Mambaquaretin-3</fullName>
        <shortName evidence="4">MQ3</shortName>
    </recommendedName>
    <alternativeName>
        <fullName evidence="4">Upsilon-Dp2a</fullName>
    </alternativeName>
</protein>
<name>MAMB3_DENPO</name>